<sequence length="281" mass="30994">MTQKIIRVGNIEIANDKPFVLFGGMNVLESRDLAMKVCEEYVRVTEKLGIPYVFKASFDKANRSSVTSYRGPGMEEGLKIFEEIKRTFNVPVITDVHEPYQAEPVAKVCDIIQLPAFLSRQTDLVVAMAKTGAVINIKKAQFLAPQEMKHILAKCEEAGNDQLILCERGSSFGYNNLVVDMLGFGIMKQFEYPVFFDVTHALQMPGGRSDSAGGRRAQVTDLAKAGMSQGLAGLFLEAHPDPDNAKCDGPCALRLDKLEPFLAQLKQLDDLVKSFPTVETA</sequence>
<name>KDSA_PSEPG</name>
<proteinExistence type="inferred from homology"/>
<feature type="chain" id="PRO_1000074985" description="2-dehydro-3-deoxyphosphooctonate aldolase">
    <location>
        <begin position="1"/>
        <end position="281"/>
    </location>
</feature>
<evidence type="ECO:0000255" key="1">
    <source>
        <dbReference type="HAMAP-Rule" id="MF_00056"/>
    </source>
</evidence>
<organism>
    <name type="scientific">Pseudomonas putida (strain GB-1)</name>
    <dbReference type="NCBI Taxonomy" id="76869"/>
    <lineage>
        <taxon>Bacteria</taxon>
        <taxon>Pseudomonadati</taxon>
        <taxon>Pseudomonadota</taxon>
        <taxon>Gammaproteobacteria</taxon>
        <taxon>Pseudomonadales</taxon>
        <taxon>Pseudomonadaceae</taxon>
        <taxon>Pseudomonas</taxon>
    </lineage>
</organism>
<reference key="1">
    <citation type="submission" date="2008-01" db="EMBL/GenBank/DDBJ databases">
        <title>Complete sequence of Pseudomonas putida GB-1.</title>
        <authorList>
            <consortium name="US DOE Joint Genome Institute"/>
            <person name="Copeland A."/>
            <person name="Lucas S."/>
            <person name="Lapidus A."/>
            <person name="Barry K."/>
            <person name="Glavina del Rio T."/>
            <person name="Dalin E."/>
            <person name="Tice H."/>
            <person name="Pitluck S."/>
            <person name="Bruce D."/>
            <person name="Goodwin L."/>
            <person name="Chertkov O."/>
            <person name="Brettin T."/>
            <person name="Detter J.C."/>
            <person name="Han C."/>
            <person name="Kuske C.R."/>
            <person name="Schmutz J."/>
            <person name="Larimer F."/>
            <person name="Land M."/>
            <person name="Hauser L."/>
            <person name="Kyrpides N."/>
            <person name="Kim E."/>
            <person name="McCarthy J.K."/>
            <person name="Richardson P."/>
        </authorList>
    </citation>
    <scope>NUCLEOTIDE SEQUENCE [LARGE SCALE GENOMIC DNA]</scope>
    <source>
        <strain>GB-1</strain>
    </source>
</reference>
<comment type="catalytic activity">
    <reaction evidence="1">
        <text>D-arabinose 5-phosphate + phosphoenolpyruvate + H2O = 3-deoxy-alpha-D-manno-2-octulosonate-8-phosphate + phosphate</text>
        <dbReference type="Rhea" id="RHEA:14053"/>
        <dbReference type="ChEBI" id="CHEBI:15377"/>
        <dbReference type="ChEBI" id="CHEBI:43474"/>
        <dbReference type="ChEBI" id="CHEBI:57693"/>
        <dbReference type="ChEBI" id="CHEBI:58702"/>
        <dbReference type="ChEBI" id="CHEBI:85985"/>
        <dbReference type="EC" id="2.5.1.55"/>
    </reaction>
</comment>
<comment type="pathway">
    <text evidence="1">Carbohydrate biosynthesis; 3-deoxy-D-manno-octulosonate biosynthesis; 3-deoxy-D-manno-octulosonate from D-ribulose 5-phosphate: step 2/3.</text>
</comment>
<comment type="pathway">
    <text evidence="1">Bacterial outer membrane biogenesis; lipopolysaccharide biosynthesis.</text>
</comment>
<comment type="subcellular location">
    <subcellularLocation>
        <location evidence="1">Cytoplasm</location>
    </subcellularLocation>
</comment>
<comment type="similarity">
    <text evidence="1">Belongs to the KdsA family.</text>
</comment>
<keyword id="KW-0963">Cytoplasm</keyword>
<keyword id="KW-0448">Lipopolysaccharide biosynthesis</keyword>
<keyword id="KW-0808">Transferase</keyword>
<accession>B0KSB8</accession>
<gene>
    <name evidence="1" type="primary">kdsA</name>
    <name type="ordered locus">PputGB1_1165</name>
</gene>
<dbReference type="EC" id="2.5.1.55" evidence="1"/>
<dbReference type="EMBL" id="CP000926">
    <property type="protein sequence ID" value="ABY97073.1"/>
    <property type="molecule type" value="Genomic_DNA"/>
</dbReference>
<dbReference type="RefSeq" id="WP_012270852.1">
    <property type="nucleotide sequence ID" value="NC_010322.1"/>
</dbReference>
<dbReference type="SMR" id="B0KSB8"/>
<dbReference type="KEGG" id="ppg:PputGB1_1165"/>
<dbReference type="eggNOG" id="COG2877">
    <property type="taxonomic scope" value="Bacteria"/>
</dbReference>
<dbReference type="HOGENOM" id="CLU_036666_0_0_6"/>
<dbReference type="UniPathway" id="UPA00030"/>
<dbReference type="UniPathway" id="UPA00357">
    <property type="reaction ID" value="UER00474"/>
</dbReference>
<dbReference type="Proteomes" id="UP000002157">
    <property type="component" value="Chromosome"/>
</dbReference>
<dbReference type="GO" id="GO:0005737">
    <property type="term" value="C:cytoplasm"/>
    <property type="evidence" value="ECO:0007669"/>
    <property type="project" value="UniProtKB-SubCell"/>
</dbReference>
<dbReference type="GO" id="GO:0008676">
    <property type="term" value="F:3-deoxy-8-phosphooctulonate synthase activity"/>
    <property type="evidence" value="ECO:0007669"/>
    <property type="project" value="UniProtKB-UniRule"/>
</dbReference>
<dbReference type="GO" id="GO:0019294">
    <property type="term" value="P:keto-3-deoxy-D-manno-octulosonic acid biosynthetic process"/>
    <property type="evidence" value="ECO:0007669"/>
    <property type="project" value="UniProtKB-UniRule"/>
</dbReference>
<dbReference type="FunFam" id="3.20.20.70:FF:000058">
    <property type="entry name" value="2-dehydro-3-deoxyphosphooctonate aldolase"/>
    <property type="match status" value="1"/>
</dbReference>
<dbReference type="Gene3D" id="3.20.20.70">
    <property type="entry name" value="Aldolase class I"/>
    <property type="match status" value="1"/>
</dbReference>
<dbReference type="HAMAP" id="MF_00056">
    <property type="entry name" value="KDO8P_synth"/>
    <property type="match status" value="1"/>
</dbReference>
<dbReference type="InterPro" id="IPR013785">
    <property type="entry name" value="Aldolase_TIM"/>
</dbReference>
<dbReference type="InterPro" id="IPR006218">
    <property type="entry name" value="DAHP1/KDSA"/>
</dbReference>
<dbReference type="InterPro" id="IPR006269">
    <property type="entry name" value="KDO8P_synthase"/>
</dbReference>
<dbReference type="NCBIfam" id="TIGR01362">
    <property type="entry name" value="KDO8P_synth"/>
    <property type="match status" value="1"/>
</dbReference>
<dbReference type="NCBIfam" id="NF003543">
    <property type="entry name" value="PRK05198.1"/>
    <property type="match status" value="1"/>
</dbReference>
<dbReference type="NCBIfam" id="NF009109">
    <property type="entry name" value="PRK12457.1"/>
    <property type="match status" value="1"/>
</dbReference>
<dbReference type="PANTHER" id="PTHR21057">
    <property type="entry name" value="PHOSPHO-2-DEHYDRO-3-DEOXYHEPTONATE ALDOLASE"/>
    <property type="match status" value="1"/>
</dbReference>
<dbReference type="Pfam" id="PF00793">
    <property type="entry name" value="DAHP_synth_1"/>
    <property type="match status" value="1"/>
</dbReference>
<dbReference type="SUPFAM" id="SSF51569">
    <property type="entry name" value="Aldolase"/>
    <property type="match status" value="1"/>
</dbReference>
<protein>
    <recommendedName>
        <fullName evidence="1">2-dehydro-3-deoxyphosphooctonate aldolase</fullName>
        <ecNumber evidence="1">2.5.1.55</ecNumber>
    </recommendedName>
    <alternativeName>
        <fullName evidence="1">3-deoxy-D-manno-octulosonic acid 8-phosphate synthase</fullName>
    </alternativeName>
    <alternativeName>
        <fullName evidence="1">KDO-8-phosphate synthase</fullName>
        <shortName evidence="1">KDO 8-P synthase</shortName>
        <shortName evidence="1">KDOPS</shortName>
    </alternativeName>
    <alternativeName>
        <fullName evidence="1">Phospho-2-dehydro-3-deoxyoctonate aldolase</fullName>
    </alternativeName>
</protein>